<name>PIGW_MOUSE</name>
<evidence type="ECO:0000250" key="1">
    <source>
        <dbReference type="UniProtKB" id="Q7TSN4"/>
    </source>
</evidence>
<evidence type="ECO:0000250" key="2">
    <source>
        <dbReference type="UniProtKB" id="Q7Z7B1"/>
    </source>
</evidence>
<evidence type="ECO:0000255" key="3"/>
<evidence type="ECO:0000305" key="4"/>
<evidence type="ECO:0000312" key="5">
    <source>
        <dbReference type="MGI" id="MGI:1917575"/>
    </source>
</evidence>
<organism>
    <name type="scientific">Mus musculus</name>
    <name type="common">Mouse</name>
    <dbReference type="NCBI Taxonomy" id="10090"/>
    <lineage>
        <taxon>Eukaryota</taxon>
        <taxon>Metazoa</taxon>
        <taxon>Chordata</taxon>
        <taxon>Craniata</taxon>
        <taxon>Vertebrata</taxon>
        <taxon>Euteleostomi</taxon>
        <taxon>Mammalia</taxon>
        <taxon>Eutheria</taxon>
        <taxon>Euarchontoglires</taxon>
        <taxon>Glires</taxon>
        <taxon>Rodentia</taxon>
        <taxon>Myomorpha</taxon>
        <taxon>Muroidea</taxon>
        <taxon>Muridae</taxon>
        <taxon>Murinae</taxon>
        <taxon>Mus</taxon>
        <taxon>Mus</taxon>
    </lineage>
</organism>
<keyword id="KW-0012">Acyltransferase</keyword>
<keyword id="KW-0256">Endoplasmic reticulum</keyword>
<keyword id="KW-0325">Glycoprotein</keyword>
<keyword id="KW-0337">GPI-anchor biosynthesis</keyword>
<keyword id="KW-0472">Membrane</keyword>
<keyword id="KW-0597">Phosphoprotein</keyword>
<keyword id="KW-1185">Reference proteome</keyword>
<keyword id="KW-0808">Transferase</keyword>
<keyword id="KW-0812">Transmembrane</keyword>
<keyword id="KW-1133">Transmembrane helix</keyword>
<sequence length="503" mass="56841">MSQKQLKEAFVRNLSGTSVLEVTQGLCFPAFCILCRGLWIIFSQHVCSFSNTWSTRFLMDFVVLIVPLVITLTVLSSFILLENLTVIVWGAWLLYQIYHRRTCYAKVPVQKVFANFLKISLESEYNPAITCYRVINSVFTAIAILAVDFPLFPRRFAKTELYGTGAMDFGVGGFIFGAAMVCPEVRRKSIEESRFNYLRKSLYSVWPLVFLGMGRLVIIKSIGYQEHSTEYGIHWNFFFTIIVVRLVTSLLLIIFPLNKSWIVAVSITVVYQLALDYTPLKRILLYGTDGSGTRVGFLNANREGIISTLGYVTIHMAGVQTGLYVLKGRAQVRDWIKATCWVFSVAVGFFISLHIVQVNIEAVSRRMANLAFCLWVVASSLMLLSCLLLSGIILSFAQFLIKGSLVPCSWKLIQSPTTHKNHSESLILEAEKNQPSLCLITALNRNQLFFFLLSNITTGLINLTMDTLHTGALWTLVVLSIYMFTNCLVIYVLDLQGKTIKFW</sequence>
<proteinExistence type="evidence at transcript level"/>
<protein>
    <recommendedName>
        <fullName evidence="4">Glucosaminyl-phosphatidylinositol-acyltransferase PIGW</fullName>
        <shortName>GlcN-PI-acyltransferase</shortName>
        <ecNumber evidence="1">2.3.-.-</ecNumber>
    </recommendedName>
    <alternativeName>
        <fullName evidence="4">Phosphatidylinositol-glycan biosynthesis class W protein</fullName>
        <shortName evidence="4">PIG-W</shortName>
    </alternativeName>
</protein>
<dbReference type="EC" id="2.3.-.-" evidence="1"/>
<dbReference type="EMBL" id="AK011762">
    <property type="protein sequence ID" value="BAB27826.3"/>
    <property type="molecule type" value="mRNA"/>
</dbReference>
<dbReference type="EMBL" id="AK081337">
    <property type="protein sequence ID" value="BAC38199.1"/>
    <property type="status" value="ALT_FRAME"/>
    <property type="molecule type" value="mRNA"/>
</dbReference>
<dbReference type="EMBL" id="AK086537">
    <property type="protein sequence ID" value="BAC39687.1"/>
    <property type="molecule type" value="mRNA"/>
</dbReference>
<dbReference type="EMBL" id="AL645623">
    <property type="status" value="NOT_ANNOTATED_CDS"/>
    <property type="molecule type" value="Genomic_DNA"/>
</dbReference>
<dbReference type="CCDS" id="CCDS36263.1"/>
<dbReference type="RefSeq" id="NP_001071104.1">
    <property type="nucleotide sequence ID" value="NM_001077636.1"/>
</dbReference>
<dbReference type="RefSeq" id="NP_001350041.1">
    <property type="nucleotide sequence ID" value="NM_001363112.1"/>
</dbReference>
<dbReference type="RefSeq" id="NP_081664.2">
    <property type="nucleotide sequence ID" value="NM_027388.2"/>
</dbReference>
<dbReference type="RefSeq" id="XP_006534222.1">
    <property type="nucleotide sequence ID" value="XM_006534159.2"/>
</dbReference>
<dbReference type="SMR" id="Q8C398"/>
<dbReference type="BioGRID" id="213986">
    <property type="interactions" value="1"/>
</dbReference>
<dbReference type="FunCoup" id="Q8C398">
    <property type="interactions" value="1472"/>
</dbReference>
<dbReference type="STRING" id="10090.ENSMUSP00000064547"/>
<dbReference type="GlyCosmos" id="Q8C398">
    <property type="glycosylation" value="1 site, No reported glycans"/>
</dbReference>
<dbReference type="GlyGen" id="Q8C398">
    <property type="glycosylation" value="1 site"/>
</dbReference>
<dbReference type="PhosphoSitePlus" id="Q8C398"/>
<dbReference type="PaxDb" id="10090-ENSMUSP00000064547"/>
<dbReference type="ProteomicsDB" id="288162"/>
<dbReference type="Antibodypedia" id="74148">
    <property type="antibodies" value="98 antibodies from 23 providers"/>
</dbReference>
<dbReference type="DNASU" id="70325"/>
<dbReference type="Ensembl" id="ENSMUST00000067058.3">
    <property type="protein sequence ID" value="ENSMUSP00000064547.3"/>
    <property type="gene ID" value="ENSMUSG00000045140.9"/>
</dbReference>
<dbReference type="Ensembl" id="ENSMUST00000108080.3">
    <property type="protein sequence ID" value="ENSMUSP00000103715.3"/>
    <property type="gene ID" value="ENSMUSG00000045140.9"/>
</dbReference>
<dbReference type="GeneID" id="70325"/>
<dbReference type="KEGG" id="mmu:70325"/>
<dbReference type="UCSC" id="uc007kqy.1">
    <property type="organism name" value="mouse"/>
</dbReference>
<dbReference type="AGR" id="MGI:1917575"/>
<dbReference type="CTD" id="284098"/>
<dbReference type="MGI" id="MGI:1917575">
    <property type="gene designation" value="Pigw"/>
</dbReference>
<dbReference type="VEuPathDB" id="HostDB:ENSMUSG00000045140"/>
<dbReference type="eggNOG" id="KOG0411">
    <property type="taxonomic scope" value="Eukaryota"/>
</dbReference>
<dbReference type="GeneTree" id="ENSGT00390000013520"/>
<dbReference type="HOGENOM" id="CLU_020802_2_2_1"/>
<dbReference type="InParanoid" id="Q8C398"/>
<dbReference type="OMA" id="GLYVMQP"/>
<dbReference type="OrthoDB" id="15270at2759"/>
<dbReference type="PhylomeDB" id="Q8C398"/>
<dbReference type="TreeFam" id="TF314687"/>
<dbReference type="Reactome" id="R-MMU-162710">
    <property type="pathway name" value="Synthesis of glycosylphosphatidylinositol (GPI)"/>
</dbReference>
<dbReference type="UniPathway" id="UPA00196"/>
<dbReference type="BioGRID-ORCS" id="70325">
    <property type="hits" value="10 hits in 81 CRISPR screens"/>
</dbReference>
<dbReference type="PRO" id="PR:Q8C398"/>
<dbReference type="Proteomes" id="UP000000589">
    <property type="component" value="Chromosome 11"/>
</dbReference>
<dbReference type="RNAct" id="Q8C398">
    <property type="molecule type" value="protein"/>
</dbReference>
<dbReference type="Bgee" id="ENSMUSG00000045140">
    <property type="expression patterns" value="Expressed in epiblast (generic) and 65 other cell types or tissues"/>
</dbReference>
<dbReference type="ExpressionAtlas" id="Q8C398">
    <property type="expression patterns" value="baseline and differential"/>
</dbReference>
<dbReference type="GO" id="GO:0005789">
    <property type="term" value="C:endoplasmic reticulum membrane"/>
    <property type="evidence" value="ECO:0000250"/>
    <property type="project" value="UniProtKB"/>
</dbReference>
<dbReference type="GO" id="GO:0032216">
    <property type="term" value="F:glucosaminyl-phosphatidylinositol O-acyltransferase activity"/>
    <property type="evidence" value="ECO:0000250"/>
    <property type="project" value="UniProtKB"/>
</dbReference>
<dbReference type="GO" id="GO:0006506">
    <property type="term" value="P:GPI anchor biosynthetic process"/>
    <property type="evidence" value="ECO:0000250"/>
    <property type="project" value="UniProtKB"/>
</dbReference>
<dbReference type="GO" id="GO:0072659">
    <property type="term" value="P:protein localization to plasma membrane"/>
    <property type="evidence" value="ECO:0000250"/>
    <property type="project" value="UniProtKB"/>
</dbReference>
<dbReference type="InterPro" id="IPR009447">
    <property type="entry name" value="PIGW/GWT1"/>
</dbReference>
<dbReference type="PANTHER" id="PTHR20661">
    <property type="entry name" value="PHOSPHATIDYLINOSITOL-GLYCAN BIOSYNTHESIS CLASS W PROTEIN"/>
    <property type="match status" value="1"/>
</dbReference>
<dbReference type="PANTHER" id="PTHR20661:SF0">
    <property type="entry name" value="PHOSPHATIDYLINOSITOL-GLYCAN BIOSYNTHESIS CLASS W PROTEIN"/>
    <property type="match status" value="1"/>
</dbReference>
<dbReference type="Pfam" id="PF06423">
    <property type="entry name" value="GWT1"/>
    <property type="match status" value="1"/>
</dbReference>
<dbReference type="PIRSF" id="PIRSF017321">
    <property type="entry name" value="GWT1"/>
    <property type="match status" value="1"/>
</dbReference>
<gene>
    <name evidence="5" type="primary">Pigw</name>
</gene>
<feature type="chain" id="PRO_0000246283" description="Glucosaminyl-phosphatidylinositol-acyltransferase PIGW">
    <location>
        <begin position="1"/>
        <end position="503"/>
    </location>
</feature>
<feature type="topological domain" description="Lumenal" evidence="1">
    <location>
        <begin position="1"/>
        <end position="21"/>
    </location>
</feature>
<feature type="transmembrane region" description="Helical" evidence="3">
    <location>
        <begin position="22"/>
        <end position="42"/>
    </location>
</feature>
<feature type="topological domain" description="Cytoplasmic" evidence="1">
    <location>
        <begin position="43"/>
        <end position="48"/>
    </location>
</feature>
<feature type="transmembrane region" description="Helical" evidence="3">
    <location>
        <begin position="49"/>
        <end position="71"/>
    </location>
</feature>
<feature type="topological domain" description="Lumenal" evidence="1">
    <location>
        <begin position="72"/>
        <end position="74"/>
    </location>
</feature>
<feature type="transmembrane region" description="Helical" evidence="3">
    <location>
        <begin position="75"/>
        <end position="97"/>
    </location>
</feature>
<feature type="topological domain" description="Cytoplasmic" evidence="1">
    <location>
        <begin position="98"/>
        <end position="131"/>
    </location>
</feature>
<feature type="transmembrane region" description="Helical" evidence="3">
    <location>
        <begin position="132"/>
        <end position="152"/>
    </location>
</feature>
<feature type="topological domain" description="Lumenal" evidence="1">
    <location>
        <begin position="153"/>
        <end position="160"/>
    </location>
</feature>
<feature type="transmembrane region" description="Helical" evidence="3">
    <location>
        <begin position="161"/>
        <end position="181"/>
    </location>
</feature>
<feature type="topological domain" description="Cytoplasmic" evidence="1">
    <location>
        <begin position="182"/>
        <end position="201"/>
    </location>
</feature>
<feature type="transmembrane region" description="Helical" evidence="3">
    <location>
        <begin position="202"/>
        <end position="222"/>
    </location>
</feature>
<feature type="topological domain" description="Lumenal" evidence="1">
    <location>
        <begin position="223"/>
        <end position="236"/>
    </location>
</feature>
<feature type="transmembrane region" description="Helical" evidence="3">
    <location>
        <begin position="237"/>
        <end position="257"/>
    </location>
</feature>
<feature type="topological domain" description="Cytoplasmic" evidence="1">
    <location>
        <begin position="258"/>
        <end position="259"/>
    </location>
</feature>
<feature type="transmembrane region" description="Helical" evidence="3">
    <location>
        <begin position="260"/>
        <end position="280"/>
    </location>
</feature>
<feature type="topological domain" description="Lumenal" evidence="1">
    <location>
        <begin position="281"/>
        <end position="304"/>
    </location>
</feature>
<feature type="transmembrane region" description="Helical" evidence="3">
    <location>
        <begin position="305"/>
        <end position="325"/>
    </location>
</feature>
<feature type="topological domain" description="Cytoplasmic" evidence="1">
    <location>
        <begin position="326"/>
        <end position="339"/>
    </location>
</feature>
<feature type="transmembrane region" description="Helical" evidence="3">
    <location>
        <begin position="340"/>
        <end position="360"/>
    </location>
</feature>
<feature type="topological domain" description="Lumenal" evidence="1">
    <location>
        <begin position="361"/>
        <end position="380"/>
    </location>
</feature>
<feature type="transmembrane region" description="Helical" evidence="3">
    <location>
        <begin position="381"/>
        <end position="401"/>
    </location>
</feature>
<feature type="topological domain" description="Cytoplasmic" evidence="1">
    <location>
        <begin position="402"/>
        <end position="447"/>
    </location>
</feature>
<feature type="transmembrane region" description="Helical" evidence="3">
    <location>
        <begin position="448"/>
        <end position="468"/>
    </location>
</feature>
<feature type="topological domain" description="Lumenal" evidence="1">
    <location>
        <begin position="469"/>
        <end position="472"/>
    </location>
</feature>
<feature type="transmembrane region" description="Helical" evidence="3">
    <location>
        <begin position="473"/>
        <end position="493"/>
    </location>
</feature>
<feature type="topological domain" description="Cytoplasmic" evidence="1">
    <location>
        <begin position="494"/>
        <end position="503"/>
    </location>
</feature>
<feature type="modified residue" description="Phosphoserine" evidence="2">
    <location>
        <position position="415"/>
    </location>
</feature>
<feature type="glycosylation site" description="N-linked (GlcNAc...) asparagine" evidence="3">
    <location>
        <position position="13"/>
    </location>
</feature>
<accession>Q8C398</accession>
<accession>Q8C4S0</accession>
<accession>Q9CSX1</accession>
<comment type="function">
    <text evidence="1 2">Acyltransferase that catalyzes the acyl transfer from an acyl-CoA at the 2-OH position of the inositol ring of glucosaminyl phosphatidylinositol (GlcN-PI) to generate GlcN-(acyl)PI and participates in the fourth step of GPI-anchor biosynthesi (By similarity). Required for the transport of GPI-anchored proteins to the plasma membrane (By similarity). Acetylation during GPI-anchor biosynthesis is not essential for the subsequent mannosylation and is usually removed soon after the attachment of GPIs to proteins (By similarity).</text>
</comment>
<comment type="pathway">
    <text evidence="1">Glycolipid biosynthesis; glycosylphosphatidylinositol-anchor biosynthesis.</text>
</comment>
<comment type="subcellular location">
    <subcellularLocation>
        <location evidence="1">Endoplasmic reticulum membrane</location>
        <topology evidence="1">Multi-pass membrane protein</topology>
    </subcellularLocation>
</comment>
<comment type="similarity">
    <text evidence="4">Belongs to the PIGW family.</text>
</comment>
<comment type="sequence caution" evidence="4">
    <conflict type="frameshift">
        <sequence resource="EMBL-CDS" id="BAC38199"/>
    </conflict>
</comment>
<reference key="1">
    <citation type="journal article" date="2005" name="Science">
        <title>The transcriptional landscape of the mammalian genome.</title>
        <authorList>
            <person name="Carninci P."/>
            <person name="Kasukawa T."/>
            <person name="Katayama S."/>
            <person name="Gough J."/>
            <person name="Frith M.C."/>
            <person name="Maeda N."/>
            <person name="Oyama R."/>
            <person name="Ravasi T."/>
            <person name="Lenhard B."/>
            <person name="Wells C."/>
            <person name="Kodzius R."/>
            <person name="Shimokawa K."/>
            <person name="Bajic V.B."/>
            <person name="Brenner S.E."/>
            <person name="Batalov S."/>
            <person name="Forrest A.R."/>
            <person name="Zavolan M."/>
            <person name="Davis M.J."/>
            <person name="Wilming L.G."/>
            <person name="Aidinis V."/>
            <person name="Allen J.E."/>
            <person name="Ambesi-Impiombato A."/>
            <person name="Apweiler R."/>
            <person name="Aturaliya R.N."/>
            <person name="Bailey T.L."/>
            <person name="Bansal M."/>
            <person name="Baxter L."/>
            <person name="Beisel K.W."/>
            <person name="Bersano T."/>
            <person name="Bono H."/>
            <person name="Chalk A.M."/>
            <person name="Chiu K.P."/>
            <person name="Choudhary V."/>
            <person name="Christoffels A."/>
            <person name="Clutterbuck D.R."/>
            <person name="Crowe M.L."/>
            <person name="Dalla E."/>
            <person name="Dalrymple B.P."/>
            <person name="de Bono B."/>
            <person name="Della Gatta G."/>
            <person name="di Bernardo D."/>
            <person name="Down T."/>
            <person name="Engstrom P."/>
            <person name="Fagiolini M."/>
            <person name="Faulkner G."/>
            <person name="Fletcher C.F."/>
            <person name="Fukushima T."/>
            <person name="Furuno M."/>
            <person name="Futaki S."/>
            <person name="Gariboldi M."/>
            <person name="Georgii-Hemming P."/>
            <person name="Gingeras T.R."/>
            <person name="Gojobori T."/>
            <person name="Green R.E."/>
            <person name="Gustincich S."/>
            <person name="Harbers M."/>
            <person name="Hayashi Y."/>
            <person name="Hensch T.K."/>
            <person name="Hirokawa N."/>
            <person name="Hill D."/>
            <person name="Huminiecki L."/>
            <person name="Iacono M."/>
            <person name="Ikeo K."/>
            <person name="Iwama A."/>
            <person name="Ishikawa T."/>
            <person name="Jakt M."/>
            <person name="Kanapin A."/>
            <person name="Katoh M."/>
            <person name="Kawasawa Y."/>
            <person name="Kelso J."/>
            <person name="Kitamura H."/>
            <person name="Kitano H."/>
            <person name="Kollias G."/>
            <person name="Krishnan S.P."/>
            <person name="Kruger A."/>
            <person name="Kummerfeld S.K."/>
            <person name="Kurochkin I.V."/>
            <person name="Lareau L.F."/>
            <person name="Lazarevic D."/>
            <person name="Lipovich L."/>
            <person name="Liu J."/>
            <person name="Liuni S."/>
            <person name="McWilliam S."/>
            <person name="Madan Babu M."/>
            <person name="Madera M."/>
            <person name="Marchionni L."/>
            <person name="Matsuda H."/>
            <person name="Matsuzawa S."/>
            <person name="Miki H."/>
            <person name="Mignone F."/>
            <person name="Miyake S."/>
            <person name="Morris K."/>
            <person name="Mottagui-Tabar S."/>
            <person name="Mulder N."/>
            <person name="Nakano N."/>
            <person name="Nakauchi H."/>
            <person name="Ng P."/>
            <person name="Nilsson R."/>
            <person name="Nishiguchi S."/>
            <person name="Nishikawa S."/>
            <person name="Nori F."/>
            <person name="Ohara O."/>
            <person name="Okazaki Y."/>
            <person name="Orlando V."/>
            <person name="Pang K.C."/>
            <person name="Pavan W.J."/>
            <person name="Pavesi G."/>
            <person name="Pesole G."/>
            <person name="Petrovsky N."/>
            <person name="Piazza S."/>
            <person name="Reed J."/>
            <person name="Reid J.F."/>
            <person name="Ring B.Z."/>
            <person name="Ringwald M."/>
            <person name="Rost B."/>
            <person name="Ruan Y."/>
            <person name="Salzberg S.L."/>
            <person name="Sandelin A."/>
            <person name="Schneider C."/>
            <person name="Schoenbach C."/>
            <person name="Sekiguchi K."/>
            <person name="Semple C.A."/>
            <person name="Seno S."/>
            <person name="Sessa L."/>
            <person name="Sheng Y."/>
            <person name="Shibata Y."/>
            <person name="Shimada H."/>
            <person name="Shimada K."/>
            <person name="Silva D."/>
            <person name="Sinclair B."/>
            <person name="Sperling S."/>
            <person name="Stupka E."/>
            <person name="Sugiura K."/>
            <person name="Sultana R."/>
            <person name="Takenaka Y."/>
            <person name="Taki K."/>
            <person name="Tammoja K."/>
            <person name="Tan S.L."/>
            <person name="Tang S."/>
            <person name="Taylor M.S."/>
            <person name="Tegner J."/>
            <person name="Teichmann S.A."/>
            <person name="Ueda H.R."/>
            <person name="van Nimwegen E."/>
            <person name="Verardo R."/>
            <person name="Wei C.L."/>
            <person name="Yagi K."/>
            <person name="Yamanishi H."/>
            <person name="Zabarovsky E."/>
            <person name="Zhu S."/>
            <person name="Zimmer A."/>
            <person name="Hide W."/>
            <person name="Bult C."/>
            <person name="Grimmond S.M."/>
            <person name="Teasdale R.D."/>
            <person name="Liu E.T."/>
            <person name="Brusic V."/>
            <person name="Quackenbush J."/>
            <person name="Wahlestedt C."/>
            <person name="Mattick J.S."/>
            <person name="Hume D.A."/>
            <person name="Kai C."/>
            <person name="Sasaki D."/>
            <person name="Tomaru Y."/>
            <person name="Fukuda S."/>
            <person name="Kanamori-Katayama M."/>
            <person name="Suzuki M."/>
            <person name="Aoki J."/>
            <person name="Arakawa T."/>
            <person name="Iida J."/>
            <person name="Imamura K."/>
            <person name="Itoh M."/>
            <person name="Kato T."/>
            <person name="Kawaji H."/>
            <person name="Kawagashira N."/>
            <person name="Kawashima T."/>
            <person name="Kojima M."/>
            <person name="Kondo S."/>
            <person name="Konno H."/>
            <person name="Nakano K."/>
            <person name="Ninomiya N."/>
            <person name="Nishio T."/>
            <person name="Okada M."/>
            <person name="Plessy C."/>
            <person name="Shibata K."/>
            <person name="Shiraki T."/>
            <person name="Suzuki S."/>
            <person name="Tagami M."/>
            <person name="Waki K."/>
            <person name="Watahiki A."/>
            <person name="Okamura-Oho Y."/>
            <person name="Suzuki H."/>
            <person name="Kawai J."/>
            <person name="Hayashizaki Y."/>
        </authorList>
    </citation>
    <scope>NUCLEOTIDE SEQUENCE [LARGE SCALE MRNA]</scope>
    <source>
        <strain>C57BL/6J</strain>
        <tissue>Head</tissue>
    </source>
</reference>
<reference key="2">
    <citation type="journal article" date="2009" name="PLoS Biol.">
        <title>Lineage-specific biology revealed by a finished genome assembly of the mouse.</title>
        <authorList>
            <person name="Church D.M."/>
            <person name="Goodstadt L."/>
            <person name="Hillier L.W."/>
            <person name="Zody M.C."/>
            <person name="Goldstein S."/>
            <person name="She X."/>
            <person name="Bult C.J."/>
            <person name="Agarwala R."/>
            <person name="Cherry J.L."/>
            <person name="DiCuccio M."/>
            <person name="Hlavina W."/>
            <person name="Kapustin Y."/>
            <person name="Meric P."/>
            <person name="Maglott D."/>
            <person name="Birtle Z."/>
            <person name="Marques A.C."/>
            <person name="Graves T."/>
            <person name="Zhou S."/>
            <person name="Teague B."/>
            <person name="Potamousis K."/>
            <person name="Churas C."/>
            <person name="Place M."/>
            <person name="Herschleb J."/>
            <person name="Runnheim R."/>
            <person name="Forrest D."/>
            <person name="Amos-Landgraf J."/>
            <person name="Schwartz D.C."/>
            <person name="Cheng Z."/>
            <person name="Lindblad-Toh K."/>
            <person name="Eichler E.E."/>
            <person name="Ponting C.P."/>
        </authorList>
    </citation>
    <scope>NUCLEOTIDE SEQUENCE [LARGE SCALE GENOMIC DNA]</scope>
    <source>
        <strain>C57BL/6J</strain>
    </source>
</reference>